<reference key="1">
    <citation type="journal article" date="1987" name="FEMS Microbiol. Lett.">
        <title>The nucleotide sequence of the gene encoding the K99 subunit of enterotoxigenic Escherichia coli.</title>
        <authorList>
            <person name="de Graaf F.K."/>
            <person name="Klaasen P."/>
        </authorList>
    </citation>
    <scope>NUCLEOTIDE SEQUENCE [GENOMIC DNA]</scope>
</reference>
<reference key="2">
    <citation type="submission" date="1996-03" db="EMBL/GenBank/DDBJ databases">
        <authorList>
            <person name="Schifferli D.M."/>
        </authorList>
    </citation>
    <scope>NUCLEOTIDE SEQUENCE [GENOMIC DNA]</scope>
    <source>
        <strain>987 / ETEC</strain>
    </source>
</reference>
<keyword id="KW-1015">Disulfide bond</keyword>
<keyword id="KW-0281">Fimbrium</keyword>
<keyword id="KW-0732">Signal</keyword>
<evidence type="ECO:0000250" key="1"/>
<evidence type="ECO:0000305" key="2"/>
<organism>
    <name type="scientific">Escherichia coli</name>
    <dbReference type="NCBI Taxonomy" id="562"/>
    <lineage>
        <taxon>Bacteria</taxon>
        <taxon>Pseudomonadati</taxon>
        <taxon>Pseudomonadota</taxon>
        <taxon>Gammaproteobacteria</taxon>
        <taxon>Enterobacterales</taxon>
        <taxon>Enterobacteriaceae</taxon>
        <taxon>Escherichia</taxon>
    </lineage>
</organism>
<gene>
    <name type="primary">fasA</name>
    <name type="synonym">fapC</name>
</gene>
<feature type="signal peptide">
    <location>
        <begin position="1"/>
        <end position="23"/>
    </location>
</feature>
<feature type="chain" id="PRO_0000009178" description="Fimbrial protein 987P">
    <location>
        <begin position="24"/>
        <end position="194"/>
    </location>
</feature>
<feature type="disulfide bond" evidence="1">
    <location>
        <begin position="46"/>
        <end position="85"/>
    </location>
</feature>
<comment type="subcellular location">
    <subcellularLocation>
        <location evidence="2">Fimbrium</location>
    </subcellularLocation>
</comment>
<comment type="similarity">
    <text evidence="2">Belongs to the fimbrial protein family.</text>
</comment>
<comment type="caution">
    <text evidence="2">It is uncertain whether Met-1 or Met-3 is the initiator.</text>
</comment>
<name>FM98_ECOLX</name>
<proteinExistence type="inferred from homology"/>
<sequence>MRMKKSALTLAVLSSLFSGYSLAAPAENNTSQANLDFTGKVTASLCQVDTSNLSQTIDLGELSTSALKATGKGPAKSFAVNLINCDTTLNSIKYTIAGNNNTGSDTKYLVPASNDTSASGVGVYIQDNNAQAVEIGTEKTVPVVSNGGLALSDQSIPLQAYIGTTTGNPDTNGGVTAGTVTASAVMTIRSAGTP</sequence>
<protein>
    <recommendedName>
        <fullName>Fimbrial protein 987P</fullName>
    </recommendedName>
    <alternativeName>
        <fullName>Fimbrial adhesin 987P</fullName>
    </alternativeName>
</protein>
<dbReference type="EMBL" id="M35257">
    <property type="protein sequence ID" value="AAA23405.1"/>
    <property type="molecule type" value="Genomic_DNA"/>
</dbReference>
<dbReference type="EMBL" id="U50547">
    <property type="protein sequence ID" value="AAB02684.1"/>
    <property type="molecule type" value="Genomic_DNA"/>
</dbReference>
<dbReference type="PIR" id="S06261">
    <property type="entry name" value="YQEC7P"/>
</dbReference>
<dbReference type="SMR" id="P21413"/>
<dbReference type="GO" id="GO:0009289">
    <property type="term" value="C:pilus"/>
    <property type="evidence" value="ECO:0007669"/>
    <property type="project" value="UniProtKB-SubCell"/>
</dbReference>
<dbReference type="GO" id="GO:0043709">
    <property type="term" value="P:cell adhesion involved in single-species biofilm formation"/>
    <property type="evidence" value="ECO:0007669"/>
    <property type="project" value="TreeGrafter"/>
</dbReference>
<dbReference type="Gene3D" id="2.60.40.1090">
    <property type="entry name" value="Fimbrial-type adhesion domain"/>
    <property type="match status" value="1"/>
</dbReference>
<dbReference type="InterPro" id="IPR000259">
    <property type="entry name" value="Adhesion_dom_fimbrial"/>
</dbReference>
<dbReference type="InterPro" id="IPR036937">
    <property type="entry name" value="Adhesion_dom_fimbrial_sf"/>
</dbReference>
<dbReference type="InterPro" id="IPR008966">
    <property type="entry name" value="Adhesion_dom_sf"/>
</dbReference>
<dbReference type="InterPro" id="IPR050263">
    <property type="entry name" value="Bact_Fimbrial_Adh_Pro"/>
</dbReference>
<dbReference type="PANTHER" id="PTHR33420:SF3">
    <property type="entry name" value="FIMBRIAL SUBUNIT ELFA"/>
    <property type="match status" value="1"/>
</dbReference>
<dbReference type="PANTHER" id="PTHR33420">
    <property type="entry name" value="FIMBRIAL SUBUNIT ELFA-RELATED"/>
    <property type="match status" value="1"/>
</dbReference>
<dbReference type="Pfam" id="PF00419">
    <property type="entry name" value="Fimbrial"/>
    <property type="match status" value="1"/>
</dbReference>
<dbReference type="SUPFAM" id="SSF49401">
    <property type="entry name" value="Bacterial adhesins"/>
    <property type="match status" value="1"/>
</dbReference>
<accession>P21413</accession>